<name>MURC_STUS1</name>
<accession>A4VIH9</accession>
<evidence type="ECO:0000255" key="1">
    <source>
        <dbReference type="HAMAP-Rule" id="MF_00046"/>
    </source>
</evidence>
<comment type="function">
    <text evidence="1">Cell wall formation.</text>
</comment>
<comment type="catalytic activity">
    <reaction evidence="1">
        <text>UDP-N-acetyl-alpha-D-muramate + L-alanine + ATP = UDP-N-acetyl-alpha-D-muramoyl-L-alanine + ADP + phosphate + H(+)</text>
        <dbReference type="Rhea" id="RHEA:23372"/>
        <dbReference type="ChEBI" id="CHEBI:15378"/>
        <dbReference type="ChEBI" id="CHEBI:30616"/>
        <dbReference type="ChEBI" id="CHEBI:43474"/>
        <dbReference type="ChEBI" id="CHEBI:57972"/>
        <dbReference type="ChEBI" id="CHEBI:70757"/>
        <dbReference type="ChEBI" id="CHEBI:83898"/>
        <dbReference type="ChEBI" id="CHEBI:456216"/>
        <dbReference type="EC" id="6.3.2.8"/>
    </reaction>
</comment>
<comment type="pathway">
    <text evidence="1">Cell wall biogenesis; peptidoglycan biosynthesis.</text>
</comment>
<comment type="subcellular location">
    <subcellularLocation>
        <location evidence="1">Cytoplasm</location>
    </subcellularLocation>
</comment>
<comment type="similarity">
    <text evidence="1">Belongs to the MurCDEF family.</text>
</comment>
<sequence length="485" mass="52176">MAKSPAAVKAEVRRMRRIRRIHFVGIGGVGMCGIAEVLLNLGYEVSGSDLKESASTERLQSFGAQIFIGHQAGNVAGADVLVVSSAINSANPEVALALEQRIPVVPRAEMLAELMRYRHGIAVAGTHGKTTTTSLLASVFAAGGLDPTFVIGGRLTAAGTNAQLGSSRYLIAEADESDASFLHLQPMVAVVTNIDADHMSTYGGDFGKLKKTFVEFLHNLPFYGLAVLCVDDPVVREIIPQIGRPTTTYGFSEDADVRAINVRQEGMRTYFTVLRDGCEPLDVSVHMPGNHNVLNALATIAIATDEGIDDEAIVQGLAEFAGVGRRFQVYGNLPVDGGSVMLVDDYGHHPREVAAVIKAVRGGWPERRLVMVYQPHRYSRTRDLYDDFVQVLGESNVLLLMEVYPAGEEPIPGADSRQLCHSIRQRGQLDPIYVERGVDLAPLVKPLLRAGDILLCQGAGDIGGLAPQLLKSPLFGGDDAARKTK</sequence>
<organism>
    <name type="scientific">Stutzerimonas stutzeri (strain A1501)</name>
    <name type="common">Pseudomonas stutzeri</name>
    <dbReference type="NCBI Taxonomy" id="379731"/>
    <lineage>
        <taxon>Bacteria</taxon>
        <taxon>Pseudomonadati</taxon>
        <taxon>Pseudomonadota</taxon>
        <taxon>Gammaproteobacteria</taxon>
        <taxon>Pseudomonadales</taxon>
        <taxon>Pseudomonadaceae</taxon>
        <taxon>Stutzerimonas</taxon>
    </lineage>
</organism>
<protein>
    <recommendedName>
        <fullName evidence="1">UDP-N-acetylmuramate--L-alanine ligase</fullName>
        <ecNumber evidence="1">6.3.2.8</ecNumber>
    </recommendedName>
    <alternativeName>
        <fullName evidence="1">UDP-N-acetylmuramoyl-L-alanine synthetase</fullName>
    </alternativeName>
</protein>
<feature type="chain" id="PRO_0000336858" description="UDP-N-acetylmuramate--L-alanine ligase">
    <location>
        <begin position="1"/>
        <end position="485"/>
    </location>
</feature>
<feature type="binding site" evidence="1">
    <location>
        <begin position="125"/>
        <end position="131"/>
    </location>
    <ligand>
        <name>ATP</name>
        <dbReference type="ChEBI" id="CHEBI:30616"/>
    </ligand>
</feature>
<dbReference type="EC" id="6.3.2.8" evidence="1"/>
<dbReference type="EMBL" id="CP000304">
    <property type="protein sequence ID" value="ABP78780.1"/>
    <property type="molecule type" value="Genomic_DNA"/>
</dbReference>
<dbReference type="RefSeq" id="WP_011912270.1">
    <property type="nucleotide sequence ID" value="NC_009434.1"/>
</dbReference>
<dbReference type="SMR" id="A4VIH9"/>
<dbReference type="GeneID" id="66820236"/>
<dbReference type="KEGG" id="psa:PST_1083"/>
<dbReference type="eggNOG" id="COG0773">
    <property type="taxonomic scope" value="Bacteria"/>
</dbReference>
<dbReference type="HOGENOM" id="CLU_028104_2_2_6"/>
<dbReference type="UniPathway" id="UPA00219"/>
<dbReference type="Proteomes" id="UP000000233">
    <property type="component" value="Chromosome"/>
</dbReference>
<dbReference type="GO" id="GO:0005737">
    <property type="term" value="C:cytoplasm"/>
    <property type="evidence" value="ECO:0007669"/>
    <property type="project" value="UniProtKB-SubCell"/>
</dbReference>
<dbReference type="GO" id="GO:0005524">
    <property type="term" value="F:ATP binding"/>
    <property type="evidence" value="ECO:0007669"/>
    <property type="project" value="UniProtKB-UniRule"/>
</dbReference>
<dbReference type="GO" id="GO:0008763">
    <property type="term" value="F:UDP-N-acetylmuramate-L-alanine ligase activity"/>
    <property type="evidence" value="ECO:0007669"/>
    <property type="project" value="UniProtKB-UniRule"/>
</dbReference>
<dbReference type="GO" id="GO:0051301">
    <property type="term" value="P:cell division"/>
    <property type="evidence" value="ECO:0007669"/>
    <property type="project" value="UniProtKB-KW"/>
</dbReference>
<dbReference type="GO" id="GO:0071555">
    <property type="term" value="P:cell wall organization"/>
    <property type="evidence" value="ECO:0007669"/>
    <property type="project" value="UniProtKB-KW"/>
</dbReference>
<dbReference type="GO" id="GO:0009252">
    <property type="term" value="P:peptidoglycan biosynthetic process"/>
    <property type="evidence" value="ECO:0007669"/>
    <property type="project" value="UniProtKB-UniRule"/>
</dbReference>
<dbReference type="GO" id="GO:0008360">
    <property type="term" value="P:regulation of cell shape"/>
    <property type="evidence" value="ECO:0007669"/>
    <property type="project" value="UniProtKB-KW"/>
</dbReference>
<dbReference type="FunFam" id="3.40.1190.10:FF:000001">
    <property type="entry name" value="UDP-N-acetylmuramate--L-alanine ligase"/>
    <property type="match status" value="1"/>
</dbReference>
<dbReference type="Gene3D" id="3.90.190.20">
    <property type="entry name" value="Mur ligase, C-terminal domain"/>
    <property type="match status" value="1"/>
</dbReference>
<dbReference type="Gene3D" id="3.40.1190.10">
    <property type="entry name" value="Mur-like, catalytic domain"/>
    <property type="match status" value="1"/>
</dbReference>
<dbReference type="Gene3D" id="3.40.50.720">
    <property type="entry name" value="NAD(P)-binding Rossmann-like Domain"/>
    <property type="match status" value="1"/>
</dbReference>
<dbReference type="HAMAP" id="MF_00046">
    <property type="entry name" value="MurC"/>
    <property type="match status" value="1"/>
</dbReference>
<dbReference type="InterPro" id="IPR036565">
    <property type="entry name" value="Mur-like_cat_sf"/>
</dbReference>
<dbReference type="InterPro" id="IPR004101">
    <property type="entry name" value="Mur_ligase_C"/>
</dbReference>
<dbReference type="InterPro" id="IPR036615">
    <property type="entry name" value="Mur_ligase_C_dom_sf"/>
</dbReference>
<dbReference type="InterPro" id="IPR013221">
    <property type="entry name" value="Mur_ligase_cen"/>
</dbReference>
<dbReference type="InterPro" id="IPR000713">
    <property type="entry name" value="Mur_ligase_N"/>
</dbReference>
<dbReference type="InterPro" id="IPR050061">
    <property type="entry name" value="MurCDEF_pg_biosynth"/>
</dbReference>
<dbReference type="InterPro" id="IPR005758">
    <property type="entry name" value="UDP-N-AcMur_Ala_ligase_MurC"/>
</dbReference>
<dbReference type="NCBIfam" id="TIGR01082">
    <property type="entry name" value="murC"/>
    <property type="match status" value="1"/>
</dbReference>
<dbReference type="PANTHER" id="PTHR43445:SF3">
    <property type="entry name" value="UDP-N-ACETYLMURAMATE--L-ALANINE LIGASE"/>
    <property type="match status" value="1"/>
</dbReference>
<dbReference type="PANTHER" id="PTHR43445">
    <property type="entry name" value="UDP-N-ACETYLMURAMATE--L-ALANINE LIGASE-RELATED"/>
    <property type="match status" value="1"/>
</dbReference>
<dbReference type="Pfam" id="PF01225">
    <property type="entry name" value="Mur_ligase"/>
    <property type="match status" value="1"/>
</dbReference>
<dbReference type="Pfam" id="PF02875">
    <property type="entry name" value="Mur_ligase_C"/>
    <property type="match status" value="1"/>
</dbReference>
<dbReference type="Pfam" id="PF08245">
    <property type="entry name" value="Mur_ligase_M"/>
    <property type="match status" value="1"/>
</dbReference>
<dbReference type="SUPFAM" id="SSF51984">
    <property type="entry name" value="MurCD N-terminal domain"/>
    <property type="match status" value="1"/>
</dbReference>
<dbReference type="SUPFAM" id="SSF53623">
    <property type="entry name" value="MurD-like peptide ligases, catalytic domain"/>
    <property type="match status" value="1"/>
</dbReference>
<dbReference type="SUPFAM" id="SSF53244">
    <property type="entry name" value="MurD-like peptide ligases, peptide-binding domain"/>
    <property type="match status" value="1"/>
</dbReference>
<proteinExistence type="inferred from homology"/>
<reference key="1">
    <citation type="journal article" date="2008" name="Proc. Natl. Acad. Sci. U.S.A.">
        <title>Nitrogen fixation island and rhizosphere competence traits in the genome of root-associated Pseudomonas stutzeri A1501.</title>
        <authorList>
            <person name="Yan Y."/>
            <person name="Yang J."/>
            <person name="Dou Y."/>
            <person name="Chen M."/>
            <person name="Ping S."/>
            <person name="Peng J."/>
            <person name="Lu W."/>
            <person name="Zhang W."/>
            <person name="Yao Z."/>
            <person name="Li H."/>
            <person name="Liu W."/>
            <person name="He S."/>
            <person name="Geng L."/>
            <person name="Zhang X."/>
            <person name="Yang F."/>
            <person name="Yu H."/>
            <person name="Zhan Y."/>
            <person name="Li D."/>
            <person name="Lin Z."/>
            <person name="Wang Y."/>
            <person name="Elmerich C."/>
            <person name="Lin M."/>
            <person name="Jin Q."/>
        </authorList>
    </citation>
    <scope>NUCLEOTIDE SEQUENCE [LARGE SCALE GENOMIC DNA]</scope>
    <source>
        <strain>A1501</strain>
    </source>
</reference>
<gene>
    <name evidence="1" type="primary">murC</name>
    <name type="ordered locus">PST_1083</name>
</gene>
<keyword id="KW-0067">ATP-binding</keyword>
<keyword id="KW-0131">Cell cycle</keyword>
<keyword id="KW-0132">Cell division</keyword>
<keyword id="KW-0133">Cell shape</keyword>
<keyword id="KW-0961">Cell wall biogenesis/degradation</keyword>
<keyword id="KW-0963">Cytoplasm</keyword>
<keyword id="KW-0436">Ligase</keyword>
<keyword id="KW-0547">Nucleotide-binding</keyword>
<keyword id="KW-0573">Peptidoglycan synthesis</keyword>
<keyword id="KW-1185">Reference proteome</keyword>